<organism>
    <name type="scientific">Mus musculus</name>
    <name type="common">Mouse</name>
    <dbReference type="NCBI Taxonomy" id="10090"/>
    <lineage>
        <taxon>Eukaryota</taxon>
        <taxon>Metazoa</taxon>
        <taxon>Chordata</taxon>
        <taxon>Craniata</taxon>
        <taxon>Vertebrata</taxon>
        <taxon>Euteleostomi</taxon>
        <taxon>Mammalia</taxon>
        <taxon>Eutheria</taxon>
        <taxon>Euarchontoglires</taxon>
        <taxon>Glires</taxon>
        <taxon>Rodentia</taxon>
        <taxon>Myomorpha</taxon>
        <taxon>Muroidea</taxon>
        <taxon>Muridae</taxon>
        <taxon>Murinae</taxon>
        <taxon>Mus</taxon>
        <taxon>Mus</taxon>
    </lineage>
</organism>
<keyword id="KW-0002">3D-structure</keyword>
<keyword id="KW-0007">Acetylation</keyword>
<keyword id="KW-1017">Isopeptide bond</keyword>
<keyword id="KW-0472">Membrane</keyword>
<keyword id="KW-0509">mRNA transport</keyword>
<keyword id="KW-0906">Nuclear pore complex</keyword>
<keyword id="KW-0539">Nucleus</keyword>
<keyword id="KW-0597">Phosphoprotein</keyword>
<keyword id="KW-0653">Protein transport</keyword>
<keyword id="KW-1185">Reference proteome</keyword>
<keyword id="KW-0677">Repeat</keyword>
<keyword id="KW-0811">Translocation</keyword>
<keyword id="KW-0813">Transport</keyword>
<keyword id="KW-0832">Ubl conjugation</keyword>
<comment type="function">
    <text evidence="6 7 8">Component of the nuclear pore complex that has a direct role in nuclear protein import (PubMed:10811608). Actively displaces NLSs from importin-alpha, and facilitates disassembly of the importin-alpha:beta-cargo complex and importin recycling (PubMed:16222336). Interacts with regulatory proteins of cell cycle progression including CDKN1B (PubMed:10811608, PubMed:10891500). This interaction is required for correct intracellular transport and degradation of CDKN1B (PubMed:10811608).</text>
</comment>
<comment type="subunit">
    <text evidence="1 8">Does not interact with TPR (By similarity). Interacts with Importin alpha-2, Importin beta, Importin beta-2, NUP153, Ran binding protein 7, CDKN1B and itself.</text>
</comment>
<comment type="subcellular location">
    <subcellularLocation>
        <location>Nucleus</location>
        <location>Nuclear pore complex</location>
    </subcellularLocation>
    <subcellularLocation>
        <location evidence="2">Nucleus membrane</location>
        <topology evidence="2">Peripheral membrane protein</topology>
        <orientation evidence="2">Nucleoplasmic side</orientation>
    </subcellularLocation>
    <text evidence="2 3">Localizes to the nucleoplasmic fibrils of the nuclear pore complex. Dissociates from the NPC structure early during prophase of mitosis. Associates with the newly formed nuclear membrane during telophase. In the testis, the localization changes during germ cell differentiation from the nuclear surface in spermatocytes to the whole nucleus (interior) in spermatids and back to the nuclear surface in spermatozoa.</text>
</comment>
<comment type="tissue specificity">
    <text>Widely expressed at low levels. Highest in the developing neural tube and adult testes.</text>
</comment>
<comment type="domain">
    <text evidence="9">Contains FG repeats. FG repeats are interaction sites for karyopherins (importins, exportins) and form probably an affinity gradient, guiding the transport proteins unidirectionally with their cargo through the NPC. FG repeat regions are highly flexible and lack ordered secondary structure. The overall conservation of FG repeats regarding exact sequence, spacing, and repeat unit length is limited.</text>
</comment>
<comment type="disruption phenotype">
    <text evidence="7">NUP50 targeted disruption results in a complex phenotype characterized by neural tube defects, exencephaly, intrauterine growth retardation, and late embryonic lethality.</text>
</comment>
<protein>
    <recommendedName>
        <fullName>Nuclear pore complex protein Nup50</fullName>
    </recommendedName>
    <alternativeName>
        <fullName>50 kDa nucleoporin</fullName>
    </alternativeName>
    <alternativeName>
        <fullName>Nuclear pore-associated protein 60 kDa-like</fullName>
    </alternativeName>
    <alternativeName>
        <fullName>Nucleoporin Nup50</fullName>
    </alternativeName>
</protein>
<feature type="chain" id="PRO_0000204869" description="Nuclear pore complex protein Nup50">
    <location>
        <begin position="1"/>
        <end position="466"/>
    </location>
</feature>
<feature type="repeat" description="1">
    <location>
        <begin position="76"/>
        <end position="77"/>
    </location>
</feature>
<feature type="repeat" description="2">
    <location>
        <begin position="112"/>
        <end position="113"/>
    </location>
</feature>
<feature type="repeat" description="3">
    <location>
        <begin position="225"/>
        <end position="226"/>
    </location>
</feature>
<feature type="repeat" description="4">
    <location>
        <begin position="271"/>
        <end position="272"/>
    </location>
</feature>
<feature type="repeat" description="5">
    <location>
        <begin position="301"/>
        <end position="302"/>
    </location>
</feature>
<feature type="domain" description="RanBD1" evidence="4">
    <location>
        <begin position="333"/>
        <end position="466"/>
    </location>
</feature>
<feature type="region of interest" description="Disordered" evidence="5">
    <location>
        <begin position="1"/>
        <end position="22"/>
    </location>
</feature>
<feature type="region of interest" description="5 X 2 AA repeats of F-G">
    <location>
        <begin position="76"/>
        <end position="302"/>
    </location>
</feature>
<feature type="region of interest" description="Disordered" evidence="5">
    <location>
        <begin position="128"/>
        <end position="150"/>
    </location>
</feature>
<feature type="region of interest" description="Binding to CDKN1B">
    <location>
        <begin position="143"/>
        <end position="205"/>
    </location>
</feature>
<feature type="region of interest" description="Disordered" evidence="5">
    <location>
        <begin position="200"/>
        <end position="257"/>
    </location>
</feature>
<feature type="region of interest" description="Disordered" evidence="5">
    <location>
        <begin position="316"/>
        <end position="343"/>
    </location>
</feature>
<feature type="compositionally biased region" description="Basic and acidic residues" evidence="5">
    <location>
        <begin position="1"/>
        <end position="14"/>
    </location>
</feature>
<feature type="compositionally biased region" description="Polar residues" evidence="5">
    <location>
        <begin position="131"/>
        <end position="150"/>
    </location>
</feature>
<feature type="compositionally biased region" description="Polar residues" evidence="5">
    <location>
        <begin position="225"/>
        <end position="235"/>
    </location>
</feature>
<feature type="compositionally biased region" description="Basic and acidic residues" evidence="5">
    <location>
        <begin position="241"/>
        <end position="257"/>
    </location>
</feature>
<feature type="modified residue" description="N6-acetyllysine" evidence="11">
    <location>
        <position position="8"/>
    </location>
</feature>
<feature type="modified residue" description="Phosphoserine" evidence="3">
    <location>
        <position position="52"/>
    </location>
</feature>
<feature type="modified residue" description="N6-acetyllysine" evidence="3">
    <location>
        <position position="82"/>
    </location>
</feature>
<feature type="modified residue" description="N6-acetyllysine" evidence="11">
    <location>
        <position position="126"/>
    </location>
</feature>
<feature type="modified residue" description="Phosphoserine" evidence="3">
    <location>
        <position position="208"/>
    </location>
</feature>
<feature type="modified residue" description="Phosphoserine" evidence="10">
    <location>
        <position position="234"/>
    </location>
</feature>
<feature type="modified residue" description="Phosphothreonine" evidence="3">
    <location>
        <position position="246"/>
    </location>
</feature>
<feature type="modified residue" description="Phosphoserine" evidence="3">
    <location>
        <position position="268"/>
    </location>
</feature>
<feature type="modified residue" description="Phosphoserine" evidence="3">
    <location>
        <position position="294"/>
    </location>
</feature>
<feature type="modified residue" description="N6-acetyllysine" evidence="11">
    <location>
        <position position="448"/>
    </location>
</feature>
<feature type="cross-link" description="Glycyl lysine isopeptide (Lys-Gly) (interchain with G-Cter in SUMO2)" evidence="3">
    <location>
        <position position="351"/>
    </location>
</feature>
<feature type="sequence conflict" description="In Ref. 2; AAF70057." evidence="9" ref="2">
    <original>KISSPKCNN</original>
    <variation>VSNPKTNGD</variation>
    <location>
        <begin position="127"/>
        <end position="135"/>
    </location>
</feature>
<feature type="sequence conflict" description="In Ref. 3; BAE40705." evidence="9" ref="3">
    <original>Q</original>
    <variation>H</variation>
    <location>
        <position position="158"/>
    </location>
</feature>
<feature type="sequence conflict" description="In Ref. 1; AAF34721." evidence="9" ref="1">
    <original>L</original>
    <variation>P</variation>
    <location>
        <position position="314"/>
    </location>
</feature>
<feature type="sequence conflict" description="In Ref. 3; AAH60234." evidence="9" ref="3">
    <original>E</original>
    <variation>D</variation>
    <location>
        <position position="321"/>
    </location>
</feature>
<feature type="sequence conflict" description="In Ref. 1; AAF34721." evidence="9" ref="1">
    <original>A</original>
    <variation>P</variation>
    <location>
        <position position="324"/>
    </location>
</feature>
<feature type="sequence conflict" description="In Ref. 3; BAB31500." evidence="9" ref="3">
    <original>LPA</original>
    <variation>IKV</variation>
    <location>
        <begin position="439"/>
        <end position="441"/>
    </location>
</feature>
<feature type="sequence conflict" description="In Ref. 3; BAB31500." evidence="9" ref="3">
    <original>E</original>
    <variation>K</variation>
    <location>
        <position position="451"/>
    </location>
</feature>
<feature type="sequence conflict" description="In Ref. 3; BAB31500." evidence="9" ref="3">
    <original>EKK</original>
    <variation>QKT</variation>
    <location>
        <begin position="462"/>
        <end position="464"/>
    </location>
</feature>
<feature type="turn" evidence="12">
    <location>
        <begin position="12"/>
        <end position="14"/>
    </location>
</feature>
<feature type="helix" evidence="12">
    <location>
        <begin position="32"/>
        <end position="35"/>
    </location>
</feature>
<sequence>MAKRVAEKELTDRNWDEEDEVEEMGTFSVASEEVMKNRAVKKAKRRNVGFESDSGGAFKGFKGLVVPSGGGGFSGFGGSGGKPLEGLTNGNSTDNATPFSNVKTAAEPKAAFGSFAVNGPTTLVDKKISSPKCNNSNQPPSSGPASSTACPGNAYHKQLAGLNCSVRDWIVKHVNTNPLCDLTPIFKDYERYLATIEKQLENGGGSSSESQTDRATAGMEPPSLFGSTKLQQESPFSFHGNKAEDTSEKVEFTAEKKSDAAQGATSASFSFGKKIESSALGSLSSGSLTGFSFSAGSSSLFGKDAAQSKAASSLFSAKASESPAGGGSSECRDGEEEENDEPPKVVVTEVKEEDAFYSKKCKLFYKKDNEFKEKGVGTLHLKPTATQKTQLLVRADTNLGNILLNVLIAPNMPCTRTGKNNVLIVCVPNPPLDEKQPTLPATMLIRVKTSEDADELHKILLEKKDA</sequence>
<gene>
    <name type="primary">Nup50</name>
    <name type="synonym">Npap60</name>
</gene>
<proteinExistence type="evidence at protein level"/>
<evidence type="ECO:0000250" key="1"/>
<evidence type="ECO:0000250" key="2">
    <source>
        <dbReference type="UniProtKB" id="O08587"/>
    </source>
</evidence>
<evidence type="ECO:0000250" key="3">
    <source>
        <dbReference type="UniProtKB" id="Q9UKX7"/>
    </source>
</evidence>
<evidence type="ECO:0000255" key="4">
    <source>
        <dbReference type="PROSITE-ProRule" id="PRU00164"/>
    </source>
</evidence>
<evidence type="ECO:0000256" key="5">
    <source>
        <dbReference type="SAM" id="MobiDB-lite"/>
    </source>
</evidence>
<evidence type="ECO:0000269" key="6">
    <source>
    </source>
</evidence>
<evidence type="ECO:0000269" key="7">
    <source>
    </source>
</evidence>
<evidence type="ECO:0000269" key="8">
    <source>
    </source>
</evidence>
<evidence type="ECO:0000305" key="9"/>
<evidence type="ECO:0007744" key="10">
    <source>
    </source>
</evidence>
<evidence type="ECO:0007744" key="11">
    <source>
    </source>
</evidence>
<evidence type="ECO:0007829" key="12">
    <source>
        <dbReference type="PDB" id="2C1M"/>
    </source>
</evidence>
<dbReference type="EMBL" id="AF229256">
    <property type="protein sequence ID" value="AAF34721.1"/>
    <property type="molecule type" value="mRNA"/>
</dbReference>
<dbReference type="EMBL" id="AF251799">
    <property type="protein sequence ID" value="AAF70057.1"/>
    <property type="molecule type" value="mRNA"/>
</dbReference>
<dbReference type="EMBL" id="AK018983">
    <property type="protein sequence ID" value="BAB31500.1"/>
    <property type="molecule type" value="mRNA"/>
</dbReference>
<dbReference type="EMBL" id="AK087706">
    <property type="protein sequence ID" value="BAC39975.1"/>
    <property type="molecule type" value="mRNA"/>
</dbReference>
<dbReference type="EMBL" id="AK133371">
    <property type="protein sequence ID" value="BAE21620.1"/>
    <property type="molecule type" value="mRNA"/>
</dbReference>
<dbReference type="EMBL" id="AK133562">
    <property type="protein sequence ID" value="BAE21727.1"/>
    <property type="molecule type" value="mRNA"/>
</dbReference>
<dbReference type="EMBL" id="AK141750">
    <property type="protein sequence ID" value="BAE24822.1"/>
    <property type="molecule type" value="mRNA"/>
</dbReference>
<dbReference type="EMBL" id="AK151947">
    <property type="protein sequence ID" value="BAE30821.1"/>
    <property type="molecule type" value="mRNA"/>
</dbReference>
<dbReference type="EMBL" id="AK152309">
    <property type="protein sequence ID" value="BAE31115.1"/>
    <property type="molecule type" value="mRNA"/>
</dbReference>
<dbReference type="EMBL" id="AK161713">
    <property type="protein sequence ID" value="BAE36546.1"/>
    <property type="molecule type" value="mRNA"/>
</dbReference>
<dbReference type="EMBL" id="AK165581">
    <property type="protein sequence ID" value="BAE38272.1"/>
    <property type="molecule type" value="mRNA"/>
</dbReference>
<dbReference type="EMBL" id="AK168888">
    <property type="protein sequence ID" value="BAE40705.1"/>
    <property type="molecule type" value="mRNA"/>
</dbReference>
<dbReference type="EMBL" id="CH466550">
    <property type="protein sequence ID" value="EDL04446.1"/>
    <property type="molecule type" value="Genomic_DNA"/>
</dbReference>
<dbReference type="EMBL" id="BC059239">
    <property type="protein sequence ID" value="AAH59239.1"/>
    <property type="molecule type" value="mRNA"/>
</dbReference>
<dbReference type="EMBL" id="BC060234">
    <property type="protein sequence ID" value="AAH60234.1"/>
    <property type="molecule type" value="mRNA"/>
</dbReference>
<dbReference type="EMBL" id="BC065102">
    <property type="protein sequence ID" value="AAH65102.1"/>
    <property type="molecule type" value="mRNA"/>
</dbReference>
<dbReference type="CCDS" id="CCDS27714.1"/>
<dbReference type="RefSeq" id="NP_057923.2">
    <property type="nucleotide sequence ID" value="NM_016714.2"/>
</dbReference>
<dbReference type="PDB" id="2C1M">
    <property type="method" value="X-ray"/>
    <property type="resolution" value="2.20 A"/>
    <property type="chains" value="B=1-46"/>
</dbReference>
<dbReference type="PDBsum" id="2C1M"/>
<dbReference type="SMR" id="Q9JIH2"/>
<dbReference type="BioGRID" id="201817">
    <property type="interactions" value="7"/>
</dbReference>
<dbReference type="ComplexPortal" id="CPX-4474">
    <property type="entry name" value="Nuclear pore complex"/>
</dbReference>
<dbReference type="DIP" id="DIP-46130N"/>
<dbReference type="FunCoup" id="Q9JIH2">
    <property type="interactions" value="3234"/>
</dbReference>
<dbReference type="IntAct" id="Q9JIH2">
    <property type="interactions" value="3"/>
</dbReference>
<dbReference type="MINT" id="Q9JIH2"/>
<dbReference type="STRING" id="10090.ENSMUSP00000131457"/>
<dbReference type="GlyGen" id="Q9JIH2">
    <property type="glycosylation" value="1 site, 1 O-linked glycan (1 site)"/>
</dbReference>
<dbReference type="iPTMnet" id="Q9JIH2"/>
<dbReference type="PhosphoSitePlus" id="Q9JIH2"/>
<dbReference type="SwissPalm" id="Q9JIH2"/>
<dbReference type="PaxDb" id="10090-ENSMUSP00000131457"/>
<dbReference type="PeptideAtlas" id="Q9JIH2"/>
<dbReference type="ProteomicsDB" id="287858"/>
<dbReference type="Pumba" id="Q9JIH2"/>
<dbReference type="DNASU" id="18141"/>
<dbReference type="Ensembl" id="ENSMUST00000165443.4">
    <property type="protein sequence ID" value="ENSMUSP00000131457.3"/>
    <property type="gene ID" value="ENSMUSG00000016619.11"/>
</dbReference>
<dbReference type="Ensembl" id="ENSMUST00000230411.2">
    <property type="protein sequence ID" value="ENSMUSP00000155656.2"/>
    <property type="gene ID" value="ENSMUSG00000016619.11"/>
</dbReference>
<dbReference type="GeneID" id="18141"/>
<dbReference type="KEGG" id="mmu:18141"/>
<dbReference type="UCSC" id="uc007xcq.1">
    <property type="organism name" value="mouse"/>
</dbReference>
<dbReference type="AGR" id="MGI:1351502"/>
<dbReference type="CTD" id="10762"/>
<dbReference type="MGI" id="MGI:1351502">
    <property type="gene designation" value="Nup50"/>
</dbReference>
<dbReference type="VEuPathDB" id="HostDB:ENSMUSG00000016619"/>
<dbReference type="eggNOG" id="KOG2724">
    <property type="taxonomic scope" value="Eukaryota"/>
</dbReference>
<dbReference type="GeneTree" id="ENSGT00440000035348"/>
<dbReference type="HOGENOM" id="CLU_032593_0_0_1"/>
<dbReference type="InParanoid" id="Q9JIH2"/>
<dbReference type="OMA" id="CDWVWEQ"/>
<dbReference type="OrthoDB" id="10062131at2759"/>
<dbReference type="PhylomeDB" id="Q9JIH2"/>
<dbReference type="TreeFam" id="TF106504"/>
<dbReference type="Reactome" id="R-MMU-159227">
    <property type="pathway name" value="Transport of the SLBP independent Mature mRNA"/>
</dbReference>
<dbReference type="Reactome" id="R-MMU-159230">
    <property type="pathway name" value="Transport of the SLBP Dependant Mature mRNA"/>
</dbReference>
<dbReference type="Reactome" id="R-MMU-159231">
    <property type="pathway name" value="Transport of Mature mRNA Derived from an Intronless Transcript"/>
</dbReference>
<dbReference type="Reactome" id="R-MMU-159236">
    <property type="pathway name" value="Transport of Mature mRNA derived from an Intron-Containing Transcript"/>
</dbReference>
<dbReference type="Reactome" id="R-MMU-170822">
    <property type="pathway name" value="Regulation of Glucokinase by Glucokinase Regulatory Protein"/>
</dbReference>
<dbReference type="Reactome" id="R-MMU-191859">
    <property type="pathway name" value="snRNP Assembly"/>
</dbReference>
<dbReference type="Reactome" id="R-MMU-3108214">
    <property type="pathway name" value="SUMOylation of DNA damage response and repair proteins"/>
</dbReference>
<dbReference type="Reactome" id="R-MMU-3232142">
    <property type="pathway name" value="SUMOylation of ubiquitinylation proteins"/>
</dbReference>
<dbReference type="Reactome" id="R-MMU-3301854">
    <property type="pathway name" value="Nuclear Pore Complex (NPC) Disassembly"/>
</dbReference>
<dbReference type="Reactome" id="R-MMU-3371453">
    <property type="pathway name" value="Regulation of HSF1-mediated heat shock response"/>
</dbReference>
<dbReference type="Reactome" id="R-MMU-4085377">
    <property type="pathway name" value="SUMOylation of SUMOylation proteins"/>
</dbReference>
<dbReference type="Reactome" id="R-MMU-4551638">
    <property type="pathway name" value="SUMOylation of chromatin organization proteins"/>
</dbReference>
<dbReference type="Reactome" id="R-MMU-4570464">
    <property type="pathway name" value="SUMOylation of RNA binding proteins"/>
</dbReference>
<dbReference type="Reactome" id="R-MMU-4615885">
    <property type="pathway name" value="SUMOylation of DNA replication proteins"/>
</dbReference>
<dbReference type="Reactome" id="R-MMU-5578749">
    <property type="pathway name" value="Transcriptional regulation by small RNAs"/>
</dbReference>
<dbReference type="BioGRID-ORCS" id="18141">
    <property type="hits" value="12 hits in 77 CRISPR screens"/>
</dbReference>
<dbReference type="ChiTaRS" id="Nup50">
    <property type="organism name" value="mouse"/>
</dbReference>
<dbReference type="EvolutionaryTrace" id="Q9JIH2"/>
<dbReference type="PRO" id="PR:Q9JIH2"/>
<dbReference type="Proteomes" id="UP000000589">
    <property type="component" value="Chromosome 15"/>
</dbReference>
<dbReference type="RNAct" id="Q9JIH2">
    <property type="molecule type" value="protein"/>
</dbReference>
<dbReference type="Bgee" id="ENSMUSG00000016619">
    <property type="expression patterns" value="Expressed in ileal epithelium and 264 other cell types or tissues"/>
</dbReference>
<dbReference type="GO" id="GO:0005635">
    <property type="term" value="C:nuclear envelope"/>
    <property type="evidence" value="ECO:0000266"/>
    <property type="project" value="ComplexPortal"/>
</dbReference>
<dbReference type="GO" id="GO:0031965">
    <property type="term" value="C:nuclear membrane"/>
    <property type="evidence" value="ECO:0000250"/>
    <property type="project" value="UniProtKB"/>
</dbReference>
<dbReference type="GO" id="GO:0005643">
    <property type="term" value="C:nuclear pore"/>
    <property type="evidence" value="ECO:0000314"/>
    <property type="project" value="MGI"/>
</dbReference>
<dbReference type="GO" id="GO:0005654">
    <property type="term" value="C:nucleoplasm"/>
    <property type="evidence" value="ECO:0007669"/>
    <property type="project" value="Ensembl"/>
</dbReference>
<dbReference type="GO" id="GO:1990904">
    <property type="term" value="C:ribonucleoprotein complex"/>
    <property type="evidence" value="ECO:0000266"/>
    <property type="project" value="MGI"/>
</dbReference>
<dbReference type="GO" id="GO:0051028">
    <property type="term" value="P:mRNA transport"/>
    <property type="evidence" value="ECO:0007669"/>
    <property type="project" value="UniProtKB-KW"/>
</dbReference>
<dbReference type="GO" id="GO:0001841">
    <property type="term" value="P:neural tube formation"/>
    <property type="evidence" value="ECO:0000315"/>
    <property type="project" value="MGI"/>
</dbReference>
<dbReference type="GO" id="GO:0006913">
    <property type="term" value="P:nucleocytoplasmic transport"/>
    <property type="evidence" value="ECO:0000303"/>
    <property type="project" value="ComplexPortal"/>
</dbReference>
<dbReference type="GO" id="GO:0015031">
    <property type="term" value="P:protein transport"/>
    <property type="evidence" value="ECO:0007669"/>
    <property type="project" value="UniProtKB-KW"/>
</dbReference>
<dbReference type="CDD" id="cd13170">
    <property type="entry name" value="RanBD_NUP50"/>
    <property type="match status" value="1"/>
</dbReference>
<dbReference type="DisProt" id="DP01879"/>
<dbReference type="FunFam" id="2.30.29.30:FF:000179">
    <property type="entry name" value="Nuclear pore complex protein Nup50"/>
    <property type="match status" value="1"/>
</dbReference>
<dbReference type="Gene3D" id="2.30.29.30">
    <property type="entry name" value="Pleckstrin-homology domain (PH domain)/Phosphotyrosine-binding domain (PTB)"/>
    <property type="match status" value="1"/>
</dbReference>
<dbReference type="IDEAL" id="IID50016"/>
<dbReference type="InterPro" id="IPR015007">
    <property type="entry name" value="NUP2/50/61"/>
</dbReference>
<dbReference type="InterPro" id="IPR011993">
    <property type="entry name" value="PH-like_dom_sf"/>
</dbReference>
<dbReference type="InterPro" id="IPR000156">
    <property type="entry name" value="Ran_bind_dom"/>
</dbReference>
<dbReference type="InterPro" id="IPR045255">
    <property type="entry name" value="RanBP1-like"/>
</dbReference>
<dbReference type="PANTHER" id="PTHR23138:SF147">
    <property type="entry name" value="NUCLEAR PORE COMPLEX PROTEIN NUP50"/>
    <property type="match status" value="1"/>
</dbReference>
<dbReference type="PANTHER" id="PTHR23138">
    <property type="entry name" value="RAN BINDING PROTEIN"/>
    <property type="match status" value="1"/>
</dbReference>
<dbReference type="Pfam" id="PF08911">
    <property type="entry name" value="NUP50"/>
    <property type="match status" value="1"/>
</dbReference>
<dbReference type="Pfam" id="PF00638">
    <property type="entry name" value="Ran_BP1"/>
    <property type="match status" value="1"/>
</dbReference>
<dbReference type="SMART" id="SM00160">
    <property type="entry name" value="RanBD"/>
    <property type="match status" value="1"/>
</dbReference>
<dbReference type="SUPFAM" id="SSF50729">
    <property type="entry name" value="PH domain-like"/>
    <property type="match status" value="1"/>
</dbReference>
<dbReference type="PROSITE" id="PS50196">
    <property type="entry name" value="RANBD1"/>
    <property type="match status" value="1"/>
</dbReference>
<name>NUP50_MOUSE</name>
<reference key="1">
    <citation type="journal article" date="2000" name="Mol. Cell. Biol.">
        <title>Characterization and targeted disruption of murine nup50, a p27(Kip1)-interacting component of the nuclear pore complex.</title>
        <authorList>
            <person name="Smitherman M."/>
            <person name="Lee K."/>
            <person name="Swanger J."/>
            <person name="Kapur R."/>
            <person name="Clurman B.E."/>
        </authorList>
    </citation>
    <scope>NUCLEOTIDE SEQUENCE [MRNA]</scope>
    <scope>FUNCTION</scope>
    <scope>DISRUPTION PHENOTYPE</scope>
    <source>
        <tissue>Embryo</tissue>
    </source>
</reference>
<reference key="2">
    <citation type="journal article" date="2000" name="EMBO J.">
        <title>Cyclin E-mediated elimination of p27 requires its interaction with the nuclear pore-associated protein mNPAP60.</title>
        <authorList>
            <person name="Mueller D."/>
            <person name="Thieke K."/>
            <person name="Buergin A."/>
            <person name="Dickmanns A."/>
            <person name="Eilers M."/>
        </authorList>
    </citation>
    <scope>NUCLEOTIDE SEQUENCE [MRNA]</scope>
    <scope>FUNCTION</scope>
    <source>
        <strain>BALB/cJ</strain>
    </source>
</reference>
<reference key="3">
    <citation type="journal article" date="2005" name="Science">
        <title>The transcriptional landscape of the mammalian genome.</title>
        <authorList>
            <person name="Carninci P."/>
            <person name="Kasukawa T."/>
            <person name="Katayama S."/>
            <person name="Gough J."/>
            <person name="Frith M.C."/>
            <person name="Maeda N."/>
            <person name="Oyama R."/>
            <person name="Ravasi T."/>
            <person name="Lenhard B."/>
            <person name="Wells C."/>
            <person name="Kodzius R."/>
            <person name="Shimokawa K."/>
            <person name="Bajic V.B."/>
            <person name="Brenner S.E."/>
            <person name="Batalov S."/>
            <person name="Forrest A.R."/>
            <person name="Zavolan M."/>
            <person name="Davis M.J."/>
            <person name="Wilming L.G."/>
            <person name="Aidinis V."/>
            <person name="Allen J.E."/>
            <person name="Ambesi-Impiombato A."/>
            <person name="Apweiler R."/>
            <person name="Aturaliya R.N."/>
            <person name="Bailey T.L."/>
            <person name="Bansal M."/>
            <person name="Baxter L."/>
            <person name="Beisel K.W."/>
            <person name="Bersano T."/>
            <person name="Bono H."/>
            <person name="Chalk A.M."/>
            <person name="Chiu K.P."/>
            <person name="Choudhary V."/>
            <person name="Christoffels A."/>
            <person name="Clutterbuck D.R."/>
            <person name="Crowe M.L."/>
            <person name="Dalla E."/>
            <person name="Dalrymple B.P."/>
            <person name="de Bono B."/>
            <person name="Della Gatta G."/>
            <person name="di Bernardo D."/>
            <person name="Down T."/>
            <person name="Engstrom P."/>
            <person name="Fagiolini M."/>
            <person name="Faulkner G."/>
            <person name="Fletcher C.F."/>
            <person name="Fukushima T."/>
            <person name="Furuno M."/>
            <person name="Futaki S."/>
            <person name="Gariboldi M."/>
            <person name="Georgii-Hemming P."/>
            <person name="Gingeras T.R."/>
            <person name="Gojobori T."/>
            <person name="Green R.E."/>
            <person name="Gustincich S."/>
            <person name="Harbers M."/>
            <person name="Hayashi Y."/>
            <person name="Hensch T.K."/>
            <person name="Hirokawa N."/>
            <person name="Hill D."/>
            <person name="Huminiecki L."/>
            <person name="Iacono M."/>
            <person name="Ikeo K."/>
            <person name="Iwama A."/>
            <person name="Ishikawa T."/>
            <person name="Jakt M."/>
            <person name="Kanapin A."/>
            <person name="Katoh M."/>
            <person name="Kawasawa Y."/>
            <person name="Kelso J."/>
            <person name="Kitamura H."/>
            <person name="Kitano H."/>
            <person name="Kollias G."/>
            <person name="Krishnan S.P."/>
            <person name="Kruger A."/>
            <person name="Kummerfeld S.K."/>
            <person name="Kurochkin I.V."/>
            <person name="Lareau L.F."/>
            <person name="Lazarevic D."/>
            <person name="Lipovich L."/>
            <person name="Liu J."/>
            <person name="Liuni S."/>
            <person name="McWilliam S."/>
            <person name="Madan Babu M."/>
            <person name="Madera M."/>
            <person name="Marchionni L."/>
            <person name="Matsuda H."/>
            <person name="Matsuzawa S."/>
            <person name="Miki H."/>
            <person name="Mignone F."/>
            <person name="Miyake S."/>
            <person name="Morris K."/>
            <person name="Mottagui-Tabar S."/>
            <person name="Mulder N."/>
            <person name="Nakano N."/>
            <person name="Nakauchi H."/>
            <person name="Ng P."/>
            <person name="Nilsson R."/>
            <person name="Nishiguchi S."/>
            <person name="Nishikawa S."/>
            <person name="Nori F."/>
            <person name="Ohara O."/>
            <person name="Okazaki Y."/>
            <person name="Orlando V."/>
            <person name="Pang K.C."/>
            <person name="Pavan W.J."/>
            <person name="Pavesi G."/>
            <person name="Pesole G."/>
            <person name="Petrovsky N."/>
            <person name="Piazza S."/>
            <person name="Reed J."/>
            <person name="Reid J.F."/>
            <person name="Ring B.Z."/>
            <person name="Ringwald M."/>
            <person name="Rost B."/>
            <person name="Ruan Y."/>
            <person name="Salzberg S.L."/>
            <person name="Sandelin A."/>
            <person name="Schneider C."/>
            <person name="Schoenbach C."/>
            <person name="Sekiguchi K."/>
            <person name="Semple C.A."/>
            <person name="Seno S."/>
            <person name="Sessa L."/>
            <person name="Sheng Y."/>
            <person name="Shibata Y."/>
            <person name="Shimada H."/>
            <person name="Shimada K."/>
            <person name="Silva D."/>
            <person name="Sinclair B."/>
            <person name="Sperling S."/>
            <person name="Stupka E."/>
            <person name="Sugiura K."/>
            <person name="Sultana R."/>
            <person name="Takenaka Y."/>
            <person name="Taki K."/>
            <person name="Tammoja K."/>
            <person name="Tan S.L."/>
            <person name="Tang S."/>
            <person name="Taylor M.S."/>
            <person name="Tegner J."/>
            <person name="Teichmann S.A."/>
            <person name="Ueda H.R."/>
            <person name="van Nimwegen E."/>
            <person name="Verardo R."/>
            <person name="Wei C.L."/>
            <person name="Yagi K."/>
            <person name="Yamanishi H."/>
            <person name="Zabarovsky E."/>
            <person name="Zhu S."/>
            <person name="Zimmer A."/>
            <person name="Hide W."/>
            <person name="Bult C."/>
            <person name="Grimmond S.M."/>
            <person name="Teasdale R.D."/>
            <person name="Liu E.T."/>
            <person name="Brusic V."/>
            <person name="Quackenbush J."/>
            <person name="Wahlestedt C."/>
            <person name="Mattick J.S."/>
            <person name="Hume D.A."/>
            <person name="Kai C."/>
            <person name="Sasaki D."/>
            <person name="Tomaru Y."/>
            <person name="Fukuda S."/>
            <person name="Kanamori-Katayama M."/>
            <person name="Suzuki M."/>
            <person name="Aoki J."/>
            <person name="Arakawa T."/>
            <person name="Iida J."/>
            <person name="Imamura K."/>
            <person name="Itoh M."/>
            <person name="Kato T."/>
            <person name="Kawaji H."/>
            <person name="Kawagashira N."/>
            <person name="Kawashima T."/>
            <person name="Kojima M."/>
            <person name="Kondo S."/>
            <person name="Konno H."/>
            <person name="Nakano K."/>
            <person name="Ninomiya N."/>
            <person name="Nishio T."/>
            <person name="Okada M."/>
            <person name="Plessy C."/>
            <person name="Shibata K."/>
            <person name="Shiraki T."/>
            <person name="Suzuki S."/>
            <person name="Tagami M."/>
            <person name="Waki K."/>
            <person name="Watahiki A."/>
            <person name="Okamura-Oho Y."/>
            <person name="Suzuki H."/>
            <person name="Kawai J."/>
            <person name="Hayashizaki Y."/>
        </authorList>
    </citation>
    <scope>NUCLEOTIDE SEQUENCE [LARGE SCALE MRNA]</scope>
    <source>
        <strain>C57BL/6J</strain>
        <tissue>Amnion</tissue>
        <tissue>Bone marrow</tissue>
        <tissue>Ovary</tissue>
        <tissue>Pituitary</tissue>
        <tissue>Testis</tissue>
        <tissue>Thymus</tissue>
    </source>
</reference>
<reference key="4">
    <citation type="journal article" date="2004" name="Genome Res.">
        <title>The status, quality, and expansion of the NIH full-length cDNA project: the Mammalian Gene Collection (MGC).</title>
        <authorList>
            <consortium name="The MGC Project Team"/>
        </authorList>
    </citation>
    <scope>NUCLEOTIDE SEQUENCE [LARGE SCALE MRNA]</scope>
    <source>
        <strain>C57BL/6J</strain>
        <tissue>Brain</tissue>
    </source>
</reference>
<reference key="5">
    <citation type="journal article" date="2010" name="Cell">
        <title>A tissue-specific atlas of mouse protein phosphorylation and expression.</title>
        <authorList>
            <person name="Huttlin E.L."/>
            <person name="Jedrychowski M.P."/>
            <person name="Elias J.E."/>
            <person name="Goswami T."/>
            <person name="Rad R."/>
            <person name="Beausoleil S.A."/>
            <person name="Villen J."/>
            <person name="Haas W."/>
            <person name="Sowa M.E."/>
            <person name="Gygi S.P."/>
        </authorList>
    </citation>
    <scope>PHOSPHORYLATION [LARGE SCALE ANALYSIS] AT SER-234</scope>
    <scope>IDENTIFICATION BY MASS SPECTROMETRY [LARGE SCALE ANALYSIS]</scope>
    <source>
        <tissue>Kidney</tissue>
        <tissue>Spleen</tissue>
        <tissue>Testis</tissue>
    </source>
</reference>
<reference key="6">
    <citation type="journal article" date="2013" name="Mol. Cell">
        <title>SIRT5-mediated lysine desuccinylation impacts diverse metabolic pathways.</title>
        <authorList>
            <person name="Park J."/>
            <person name="Chen Y."/>
            <person name="Tishkoff D.X."/>
            <person name="Peng C."/>
            <person name="Tan M."/>
            <person name="Dai L."/>
            <person name="Xie Z."/>
            <person name="Zhang Y."/>
            <person name="Zwaans B.M."/>
            <person name="Skinner M.E."/>
            <person name="Lombard D.B."/>
            <person name="Zhao Y."/>
        </authorList>
    </citation>
    <scope>ACETYLATION [LARGE SCALE ANALYSIS] AT LYS-8; LYS-126 AND LYS-448</scope>
    <scope>IDENTIFICATION BY MASS SPECTROMETRY [LARGE SCALE ANALYSIS]</scope>
    <source>
        <tissue>Embryonic fibroblast</tissue>
    </source>
</reference>
<reference key="7">
    <citation type="journal article" date="2005" name="EMBO J.">
        <title>Nup50/Npap60 function in nuclear protein import complex disassembly and importin recycling.</title>
        <authorList>
            <person name="Matsuura Y."/>
            <person name="Stewart M."/>
        </authorList>
    </citation>
    <scope>X-RAY CRYSTALLOGRAPHY (2.2 ANGSTROMS) OF 1-46 IN COMPLEX WITH KPNA2</scope>
    <scope>FUNCTION</scope>
</reference>
<accession>Q9JIH2</accession>
<accession>Q3TG43</accession>
<accession>Q3TN17</accession>
<accession>Q6P1F4</accession>
<accession>Q6PAL4</accession>
<accession>Q8C2Y6</accession>
<accession>Q9CU02</accession>
<accession>Q9JK85</accession>